<keyword id="KW-0004">4Fe-4S</keyword>
<keyword id="KW-0408">Iron</keyword>
<keyword id="KW-0411">Iron-sulfur</keyword>
<keyword id="KW-0479">Metal-binding</keyword>
<keyword id="KW-0533">Nickel</keyword>
<keyword id="KW-0560">Oxidoreductase</keyword>
<keyword id="KW-1185">Reference proteome</keyword>
<keyword id="KW-0677">Repeat</keyword>
<name>ACDA2_ARCFU</name>
<comment type="function">
    <text evidence="1">Part of the ACDS complex that catalyzes the reversible cleavage of acetyl-CoA, allowing autotrophic growth from CO(2). The alpha-epsilon subcomponent functions as a carbon monoxide dehydrogenase.</text>
</comment>
<comment type="catalytic activity">
    <reaction evidence="1">
        <text>CO + 2 oxidized [2Fe-2S]-[ferredoxin] + H2O = 2 reduced [2Fe-2S]-[ferredoxin] + CO2 + 2 H(+)</text>
        <dbReference type="Rhea" id="RHEA:21040"/>
        <dbReference type="Rhea" id="RHEA-COMP:10000"/>
        <dbReference type="Rhea" id="RHEA-COMP:10001"/>
        <dbReference type="ChEBI" id="CHEBI:15377"/>
        <dbReference type="ChEBI" id="CHEBI:15378"/>
        <dbReference type="ChEBI" id="CHEBI:16526"/>
        <dbReference type="ChEBI" id="CHEBI:17245"/>
        <dbReference type="ChEBI" id="CHEBI:33737"/>
        <dbReference type="ChEBI" id="CHEBI:33738"/>
        <dbReference type="EC" id="1.2.7.4"/>
    </reaction>
</comment>
<comment type="cofactor">
    <cofactor evidence="1">
        <name>[4Fe-4S] cluster</name>
        <dbReference type="ChEBI" id="CHEBI:49883"/>
    </cofactor>
    <text evidence="1">Binds 7 [4Fe-4S] clusters per heterotetramer.</text>
</comment>
<comment type="cofactor">
    <cofactor evidence="1">
        <name>[Ni-4Fe-4S] cluster</name>
        <dbReference type="ChEBI" id="CHEBI:47739"/>
    </cofactor>
    <text evidence="1">Binds 2 [Ni-4Fe-4S] clusters per heterotetramer.</text>
</comment>
<comment type="subunit">
    <text evidence="1">Heterotetramer of two alpha and two epsilon subunits. The ACDS complex is made up of alpha, epsilon, beta, gamma and delta subunits with a probable stoichiometry of (alpha(2)epsilon(2))(4)-beta(8)-(gamma(1)delta(1))(8).</text>
</comment>
<comment type="domain">
    <text evidence="1">Cluster B is an all-cysteinyl-liganded 4Fe-4S cluster; cluster C is a mixed Ni-Fe-S cluster which is the active site of CO oxidation. Cluster D is also an all-cysteinyl-liganded 4Fe-4S cluster that bridges the two subunits of the CODH dimer. Contains two additional 4Fe-4S clusters, dubbed E and F, that probably transport electrons from ferredoxin to the B cluster.</text>
</comment>
<comment type="similarity">
    <text evidence="1">Belongs to the Ni-containing carbon monoxide dehydrogenase family.</text>
</comment>
<evidence type="ECO:0000255" key="1">
    <source>
        <dbReference type="HAMAP-Rule" id="MF_01137"/>
    </source>
</evidence>
<proteinExistence type="inferred from homology"/>
<organism>
    <name type="scientific">Archaeoglobus fulgidus (strain ATCC 49558 / DSM 4304 / JCM 9628 / NBRC 100126 / VC-16)</name>
    <dbReference type="NCBI Taxonomy" id="224325"/>
    <lineage>
        <taxon>Archaea</taxon>
        <taxon>Methanobacteriati</taxon>
        <taxon>Methanobacteriota</taxon>
        <taxon>Archaeoglobi</taxon>
        <taxon>Archaeoglobales</taxon>
        <taxon>Archaeoglobaceae</taxon>
        <taxon>Archaeoglobus</taxon>
    </lineage>
</organism>
<protein>
    <recommendedName>
        <fullName evidence="1">Acetyl-CoA decarbonylase/synthase complex subunit alpha 2</fullName>
        <shortName evidence="1">ACDS complex subunit alpha 2</shortName>
        <ecNumber evidence="1">1.2.7.4</ecNumber>
    </recommendedName>
    <alternativeName>
        <fullName evidence="1">ACDS complex carbon monoxide dehydrogenase subunit alpha 2</fullName>
        <shortName evidence="1">ACDS CODH subunit alpha 2</shortName>
    </alternativeName>
</protein>
<gene>
    <name evidence="1" type="primary">cdhA2</name>
    <name type="ordered locus">AF_2397</name>
</gene>
<reference key="1">
    <citation type="journal article" date="1997" name="Nature">
        <title>The complete genome sequence of the hyperthermophilic, sulphate-reducing archaeon Archaeoglobus fulgidus.</title>
        <authorList>
            <person name="Klenk H.-P."/>
            <person name="Clayton R.A."/>
            <person name="Tomb J.-F."/>
            <person name="White O."/>
            <person name="Nelson K.E."/>
            <person name="Ketchum K.A."/>
            <person name="Dodson R.J."/>
            <person name="Gwinn M.L."/>
            <person name="Hickey E.K."/>
            <person name="Peterson J.D."/>
            <person name="Richardson D.L."/>
            <person name="Kerlavage A.R."/>
            <person name="Graham D.E."/>
            <person name="Kyrpides N.C."/>
            <person name="Fleischmann R.D."/>
            <person name="Quackenbush J."/>
            <person name="Lee N.H."/>
            <person name="Sutton G.G."/>
            <person name="Gill S.R."/>
            <person name="Kirkness E.F."/>
            <person name="Dougherty B.A."/>
            <person name="McKenney K."/>
            <person name="Adams M.D."/>
            <person name="Loftus B.J."/>
            <person name="Peterson S.N."/>
            <person name="Reich C.I."/>
            <person name="McNeil L.K."/>
            <person name="Badger J.H."/>
            <person name="Glodek A."/>
            <person name="Zhou L."/>
            <person name="Overbeek R."/>
            <person name="Gocayne J.D."/>
            <person name="Weidman J.F."/>
            <person name="McDonald L.A."/>
            <person name="Utterback T.R."/>
            <person name="Cotton M.D."/>
            <person name="Spriggs T."/>
            <person name="Artiach P."/>
            <person name="Kaine B.P."/>
            <person name="Sykes S.M."/>
            <person name="Sadow P.W."/>
            <person name="D'Andrea K.P."/>
            <person name="Bowman C."/>
            <person name="Fujii C."/>
            <person name="Garland S.A."/>
            <person name="Mason T.M."/>
            <person name="Olsen G.J."/>
            <person name="Fraser C.M."/>
            <person name="Smith H.O."/>
            <person name="Woese C.R."/>
            <person name="Venter J.C."/>
        </authorList>
    </citation>
    <scope>NUCLEOTIDE SEQUENCE [LARGE SCALE GENOMIC DNA]</scope>
    <source>
        <strain>ATCC 49558 / DSM 4304 / JCM 9628 / NBRC 100126 / VC-16</strain>
    </source>
</reference>
<sequence>MVLEFGKGAFVVDDLRNVTIKIGEIAEEEEEWAPMGPTPMPGIATLRDWDFFLLKRYKPFYAPACDMCCLCTMGKCDLTGNKRGACGIDLAAQTGRIVTIACSIGVSAHTGHARHMLHDIEHMTGKKLSEIPVDLGPEIDEVAPLTELITGIKPKTLEDLERALRYAEEQIVQVVDAVHTGQEGSYLDYESKALHLGMLDSLGKEIADIAQICAFGYPKGEDNQPLIEVGMGVMDRSKAMILVIGHHAPPVLNIADYIEENGLEDEVDLGGICCTANDMTRYYQKAKIVSALGRQLKVIRAGLADVIVIDEQCIRADILYHTKKLGIPVICTNEKAMHALPDMTKEEPKNIIKYLLDGNPGCVILDPLKVGEVAVEVARARRKQRGDDIGPRLTEEQFMEYARACTQCGNCTIACPQGIRIGEAMEAAENGDRSKLEKEWDVCIACGRCEQVCPKGIPIIDMYNYAAWNLIVNEKGKLRRGRGPIRDSEIRNVGAPIVLGTIPGIIAVIGCGNYPNGTRDAYTIMDEFASRNYIVVTTGCMAFDAALYKDEEGQTVYEKYHDRFDGGGVVQIGSCVANAHIHGAAIKVARIFAKRNIRANYEEIADYILNRVGACGVAWGAYSQKAASIATGFNRLGIPAVVGPHGSKYRRAFLGRPYNDEDWMVYDARTGEKVRIEPAPQDLLVAAETIEEAIPLMAKLCFRPNDTTQGRSIKLTHYIDLSLKYLKRMPDDWHLFVRTEADLPLAKKEELLKELEDKHGWKIDWQKKKIVEGPIRGYHAGFNPTNLERCLRDGFMTV</sequence>
<feature type="chain" id="PRO_0000155073" description="Acetyl-CoA decarbonylase/synthase complex subunit alpha 2">
    <location>
        <begin position="1"/>
        <end position="798"/>
    </location>
</feature>
<feature type="domain" description="4Fe-4S ferredoxin-type 1" evidence="1">
    <location>
        <begin position="395"/>
        <end position="424"/>
    </location>
</feature>
<feature type="domain" description="4Fe-4S ferredoxin-type 2" evidence="1">
    <location>
        <begin position="434"/>
        <end position="463"/>
    </location>
</feature>
<feature type="binding site" evidence="1">
    <location>
        <position position="65"/>
    </location>
    <ligand>
        <name>[4Fe-4S] cluster</name>
        <dbReference type="ChEBI" id="CHEBI:49883"/>
        <label>1</label>
        <note>ligand shared between dimeric partners</note>
    </ligand>
</feature>
<feature type="binding site" evidence="1">
    <location>
        <position position="68"/>
    </location>
    <ligand>
        <name>[4Fe-4S] cluster</name>
        <dbReference type="ChEBI" id="CHEBI:49883"/>
        <label>2</label>
    </ligand>
</feature>
<feature type="binding site" evidence="1">
    <location>
        <position position="69"/>
    </location>
    <ligand>
        <name>[4Fe-4S] cluster</name>
        <dbReference type="ChEBI" id="CHEBI:49883"/>
        <label>1</label>
        <note>ligand shared between dimeric partners</note>
    </ligand>
</feature>
<feature type="binding site" evidence="1">
    <location>
        <position position="71"/>
    </location>
    <ligand>
        <name>[4Fe-4S] cluster</name>
        <dbReference type="ChEBI" id="CHEBI:49883"/>
        <label>2</label>
    </ligand>
</feature>
<feature type="binding site" evidence="1">
    <location>
        <position position="76"/>
    </location>
    <ligand>
        <name>[4Fe-4S] cluster</name>
        <dbReference type="ChEBI" id="CHEBI:49883"/>
        <label>2</label>
    </ligand>
</feature>
<feature type="binding site" evidence="1">
    <location>
        <position position="86"/>
    </location>
    <ligand>
        <name>[4Fe-4S] cluster</name>
        <dbReference type="ChEBI" id="CHEBI:49883"/>
        <label>2</label>
    </ligand>
</feature>
<feature type="binding site" evidence="1">
    <location>
        <position position="109"/>
    </location>
    <ligand>
        <name>CO</name>
        <dbReference type="ChEBI" id="CHEBI:17245"/>
    </ligand>
</feature>
<feature type="binding site" evidence="1">
    <location>
        <position position="246"/>
    </location>
    <ligand>
        <name>[Ni-4Fe-4S] cluster</name>
        <dbReference type="ChEBI" id="CHEBI:47739"/>
    </ligand>
</feature>
<feature type="binding site" evidence="1">
    <location>
        <position position="274"/>
    </location>
    <ligand>
        <name>[Ni-4Fe-4S] cluster</name>
        <dbReference type="ChEBI" id="CHEBI:47739"/>
    </ligand>
</feature>
<feature type="binding site" evidence="1">
    <location>
        <position position="313"/>
    </location>
    <ligand>
        <name>[Ni-4Fe-4S] cluster</name>
        <dbReference type="ChEBI" id="CHEBI:47739"/>
    </ligand>
</feature>
<feature type="binding site" evidence="1">
    <location>
        <position position="405"/>
    </location>
    <ligand>
        <name>[4Fe-4S] cluster</name>
        <dbReference type="ChEBI" id="CHEBI:49883"/>
        <label>3</label>
    </ligand>
</feature>
<feature type="binding site" evidence="1">
    <location>
        <position position="408"/>
    </location>
    <ligand>
        <name>[4Fe-4S] cluster</name>
        <dbReference type="ChEBI" id="CHEBI:49883"/>
        <label>3</label>
    </ligand>
</feature>
<feature type="binding site" evidence="1">
    <location>
        <position position="411"/>
    </location>
    <ligand>
        <name>[4Fe-4S] cluster</name>
        <dbReference type="ChEBI" id="CHEBI:49883"/>
        <label>3</label>
    </ligand>
</feature>
<feature type="binding site" evidence="1">
    <location>
        <position position="415"/>
    </location>
    <ligand>
        <name>[4Fe-4S] cluster</name>
        <dbReference type="ChEBI" id="CHEBI:49883"/>
        <label>4</label>
    </ligand>
</feature>
<feature type="binding site" evidence="1">
    <location>
        <position position="443"/>
    </location>
    <ligand>
        <name>[4Fe-4S] cluster</name>
        <dbReference type="ChEBI" id="CHEBI:49883"/>
        <label>4</label>
    </ligand>
</feature>
<feature type="binding site" evidence="1">
    <location>
        <position position="446"/>
    </location>
    <ligand>
        <name>[4Fe-4S] cluster</name>
        <dbReference type="ChEBI" id="CHEBI:49883"/>
        <label>4</label>
    </ligand>
</feature>
<feature type="binding site" evidence="1">
    <location>
        <position position="449"/>
    </location>
    <ligand>
        <name>[4Fe-4S] cluster</name>
        <dbReference type="ChEBI" id="CHEBI:49883"/>
        <label>4</label>
    </ligand>
</feature>
<feature type="binding site" evidence="1">
    <location>
        <position position="453"/>
    </location>
    <ligand>
        <name>[4Fe-4S] cluster</name>
        <dbReference type="ChEBI" id="CHEBI:49883"/>
        <label>3</label>
    </ligand>
</feature>
<feature type="binding site" evidence="1">
    <location>
        <position position="511"/>
    </location>
    <ligand>
        <name>[Ni-4Fe-4S] cluster</name>
        <dbReference type="ChEBI" id="CHEBI:47739"/>
    </ligand>
</feature>
<feature type="binding site" evidence="1">
    <location>
        <position position="540"/>
    </location>
    <ligand>
        <name>[Ni-4Fe-4S] cluster</name>
        <dbReference type="ChEBI" id="CHEBI:47739"/>
    </ligand>
</feature>
<feature type="binding site" evidence="1">
    <location>
        <position position="575"/>
    </location>
    <ligand>
        <name>[Ni-4Fe-4S] cluster</name>
        <dbReference type="ChEBI" id="CHEBI:47739"/>
    </ligand>
</feature>
<accession>O30274</accession>
<dbReference type="EC" id="1.2.7.4" evidence="1"/>
<dbReference type="EMBL" id="AE000782">
    <property type="protein sequence ID" value="AAB91266.1"/>
    <property type="molecule type" value="Genomic_DNA"/>
</dbReference>
<dbReference type="PIR" id="F69549">
    <property type="entry name" value="F69549"/>
</dbReference>
<dbReference type="RefSeq" id="WP_010879884.1">
    <property type="nucleotide sequence ID" value="NC_000917.1"/>
</dbReference>
<dbReference type="SMR" id="O30274"/>
<dbReference type="STRING" id="224325.AF_2397"/>
<dbReference type="PaxDb" id="224325-AF_2397"/>
<dbReference type="EnsemblBacteria" id="AAB91266">
    <property type="protein sequence ID" value="AAB91266"/>
    <property type="gene ID" value="AF_2397"/>
</dbReference>
<dbReference type="GeneID" id="1485627"/>
<dbReference type="KEGG" id="afu:AF_2397"/>
<dbReference type="eggNOG" id="arCOG02428">
    <property type="taxonomic scope" value="Archaea"/>
</dbReference>
<dbReference type="HOGENOM" id="CLU_361186_0_0_2"/>
<dbReference type="OrthoDB" id="35334at2157"/>
<dbReference type="PhylomeDB" id="O30274"/>
<dbReference type="Proteomes" id="UP000002199">
    <property type="component" value="Chromosome"/>
</dbReference>
<dbReference type="GO" id="GO:0051539">
    <property type="term" value="F:4 iron, 4 sulfur cluster binding"/>
    <property type="evidence" value="ECO:0007669"/>
    <property type="project" value="UniProtKB-KW"/>
</dbReference>
<dbReference type="GO" id="GO:0043885">
    <property type="term" value="F:anaerobic carbon-monoxide dehydrogenase activity"/>
    <property type="evidence" value="ECO:0007669"/>
    <property type="project" value="UniProtKB-UniRule"/>
</dbReference>
<dbReference type="GO" id="GO:0050418">
    <property type="term" value="F:hydroxylamine reductase activity"/>
    <property type="evidence" value="ECO:0007669"/>
    <property type="project" value="TreeGrafter"/>
</dbReference>
<dbReference type="GO" id="GO:0005506">
    <property type="term" value="F:iron ion binding"/>
    <property type="evidence" value="ECO:0007669"/>
    <property type="project" value="UniProtKB-UniRule"/>
</dbReference>
<dbReference type="GO" id="GO:0016151">
    <property type="term" value="F:nickel cation binding"/>
    <property type="evidence" value="ECO:0007669"/>
    <property type="project" value="UniProtKB-UniRule"/>
</dbReference>
<dbReference type="GO" id="GO:0004601">
    <property type="term" value="F:peroxidase activity"/>
    <property type="evidence" value="ECO:0007669"/>
    <property type="project" value="TreeGrafter"/>
</dbReference>
<dbReference type="GO" id="GO:0006084">
    <property type="term" value="P:acetyl-CoA metabolic process"/>
    <property type="evidence" value="ECO:0007669"/>
    <property type="project" value="InterPro"/>
</dbReference>
<dbReference type="GO" id="GO:0006091">
    <property type="term" value="P:generation of precursor metabolites and energy"/>
    <property type="evidence" value="ECO:0007669"/>
    <property type="project" value="InterPro"/>
</dbReference>
<dbReference type="GO" id="GO:0042542">
    <property type="term" value="P:response to hydrogen peroxide"/>
    <property type="evidence" value="ECO:0007669"/>
    <property type="project" value="TreeGrafter"/>
</dbReference>
<dbReference type="CDD" id="cd01916">
    <property type="entry name" value="ACS_1"/>
    <property type="match status" value="1"/>
</dbReference>
<dbReference type="Gene3D" id="1.20.1270.30">
    <property type="match status" value="1"/>
</dbReference>
<dbReference type="Gene3D" id="3.30.70.20">
    <property type="match status" value="1"/>
</dbReference>
<dbReference type="Gene3D" id="3.40.50.2030">
    <property type="match status" value="2"/>
</dbReference>
<dbReference type="HAMAP" id="MF_01137">
    <property type="entry name" value="CdhA"/>
    <property type="match status" value="1"/>
</dbReference>
<dbReference type="InterPro" id="IPR017896">
    <property type="entry name" value="4Fe4S_Fe-S-bd"/>
</dbReference>
<dbReference type="InterPro" id="IPR017900">
    <property type="entry name" value="4Fe4S_Fe_S_CS"/>
</dbReference>
<dbReference type="InterPro" id="IPR004460">
    <property type="entry name" value="CdhA"/>
</dbReference>
<dbReference type="InterPro" id="IPR016101">
    <property type="entry name" value="CO_DH_a-bundle"/>
</dbReference>
<dbReference type="InterPro" id="IPR004137">
    <property type="entry name" value="HCP/CODH"/>
</dbReference>
<dbReference type="InterPro" id="IPR016099">
    <property type="entry name" value="Prismane-like_a/b-sand"/>
</dbReference>
<dbReference type="InterPro" id="IPR011254">
    <property type="entry name" value="Prismane-like_sf"/>
</dbReference>
<dbReference type="NCBIfam" id="TIGR00314">
    <property type="entry name" value="cdhA"/>
    <property type="match status" value="1"/>
</dbReference>
<dbReference type="PANTHER" id="PTHR30109:SF6">
    <property type="entry name" value="ACETYL-COA DECARBONYLASE_SYNTHASE COMPLEX SUBUNIT ALPHA"/>
    <property type="match status" value="1"/>
</dbReference>
<dbReference type="PANTHER" id="PTHR30109">
    <property type="entry name" value="HYDROXYLAMINE REDUCTASE"/>
    <property type="match status" value="1"/>
</dbReference>
<dbReference type="Pfam" id="PF13187">
    <property type="entry name" value="Fer4_9"/>
    <property type="match status" value="1"/>
</dbReference>
<dbReference type="Pfam" id="PF03063">
    <property type="entry name" value="Prismane"/>
    <property type="match status" value="2"/>
</dbReference>
<dbReference type="SUPFAM" id="SSF46548">
    <property type="entry name" value="alpha-helical ferredoxin"/>
    <property type="match status" value="1"/>
</dbReference>
<dbReference type="SUPFAM" id="SSF56821">
    <property type="entry name" value="Prismane protein-like"/>
    <property type="match status" value="1"/>
</dbReference>
<dbReference type="PROSITE" id="PS00198">
    <property type="entry name" value="4FE4S_FER_1"/>
    <property type="match status" value="2"/>
</dbReference>
<dbReference type="PROSITE" id="PS51379">
    <property type="entry name" value="4FE4S_FER_2"/>
    <property type="match status" value="2"/>
</dbReference>